<feature type="chain" id="PRO_0000207984" description="dTDP-4-dehydrorhamnose reductase">
    <location>
        <begin position="1"/>
        <end position="299"/>
    </location>
</feature>
<feature type="active site" description="Proton donor/acceptor" evidence="1">
    <location>
        <position position="128"/>
    </location>
</feature>
<feature type="binding site" evidence="1">
    <location>
        <begin position="10"/>
        <end position="12"/>
    </location>
    <ligand>
        <name>NADH</name>
        <dbReference type="ChEBI" id="CHEBI:57945"/>
    </ligand>
</feature>
<feature type="binding site" evidence="1">
    <location>
        <begin position="11"/>
        <end position="12"/>
    </location>
    <ligand>
        <name>NADPH</name>
        <dbReference type="ChEBI" id="CHEBI:57783"/>
    </ligand>
</feature>
<feature type="binding site" evidence="1">
    <location>
        <position position="30"/>
    </location>
    <ligand>
        <name>NADH</name>
        <dbReference type="ChEBI" id="CHEBI:57945"/>
    </ligand>
</feature>
<feature type="binding site" evidence="1">
    <location>
        <begin position="39"/>
        <end position="40"/>
    </location>
    <ligand>
        <name>NADH</name>
        <dbReference type="ChEBI" id="CHEBI:57945"/>
    </ligand>
</feature>
<feature type="binding site" evidence="1">
    <location>
        <begin position="39"/>
        <end position="40"/>
    </location>
    <ligand>
        <name>NADPH</name>
        <dbReference type="ChEBI" id="CHEBI:57783"/>
    </ligand>
</feature>
<feature type="binding site" evidence="1">
    <location>
        <begin position="63"/>
        <end position="65"/>
    </location>
    <ligand>
        <name>NADH</name>
        <dbReference type="ChEBI" id="CHEBI:57945"/>
    </ligand>
</feature>
<feature type="binding site" evidence="1">
    <location>
        <begin position="63"/>
        <end position="65"/>
    </location>
    <ligand>
        <name>NADPH</name>
        <dbReference type="ChEBI" id="CHEBI:57783"/>
    </ligand>
</feature>
<feature type="binding site" evidence="1">
    <location>
        <position position="102"/>
    </location>
    <ligand>
        <name>NADPH</name>
        <dbReference type="ChEBI" id="CHEBI:57783"/>
    </ligand>
</feature>
<feature type="binding site" evidence="1">
    <location>
        <begin position="104"/>
        <end position="105"/>
    </location>
    <ligand>
        <name>dTDP-beta-L-rhamnose</name>
        <dbReference type="ChEBI" id="CHEBI:57510"/>
    </ligand>
</feature>
<feature type="binding site" evidence="1">
    <location>
        <position position="128"/>
    </location>
    <ligand>
        <name>NADH</name>
        <dbReference type="ChEBI" id="CHEBI:57945"/>
    </ligand>
</feature>
<feature type="binding site" evidence="1">
    <location>
        <position position="128"/>
    </location>
    <ligand>
        <name>NADPH</name>
        <dbReference type="ChEBI" id="CHEBI:57783"/>
    </ligand>
</feature>
<feature type="binding site" evidence="1">
    <location>
        <position position="132"/>
    </location>
    <ligand>
        <name>NADH</name>
        <dbReference type="ChEBI" id="CHEBI:57945"/>
    </ligand>
</feature>
<feature type="binding site" evidence="1">
    <location>
        <position position="132"/>
    </location>
    <ligand>
        <name>NADPH</name>
        <dbReference type="ChEBI" id="CHEBI:57783"/>
    </ligand>
</feature>
<feature type="binding site" evidence="1">
    <location>
        <position position="153"/>
    </location>
    <ligand>
        <name>dTDP-beta-L-rhamnose</name>
        <dbReference type="ChEBI" id="CHEBI:57510"/>
    </ligand>
</feature>
<feature type="site" description="Could provide a fine-tuning to achieve optimal pKa matching between active site and substrate" evidence="1">
    <location>
        <position position="104"/>
    </location>
</feature>
<evidence type="ECO:0000250" key="1">
    <source>
        <dbReference type="UniProtKB" id="P26392"/>
    </source>
</evidence>
<evidence type="ECO:0000303" key="2">
    <source>
    </source>
</evidence>
<evidence type="ECO:0000305" key="3"/>
<evidence type="ECO:0000305" key="4">
    <source>
    </source>
</evidence>
<keyword id="KW-0119">Carbohydrate metabolism</keyword>
<keyword id="KW-0448">Lipopolysaccharide biosynthesis</keyword>
<keyword id="KW-0460">Magnesium</keyword>
<keyword id="KW-0479">Metal-binding</keyword>
<keyword id="KW-0520">NAD</keyword>
<keyword id="KW-0521">NADP</keyword>
<keyword id="KW-0560">Oxidoreductase</keyword>
<keyword id="KW-1185">Reference proteome</keyword>
<proteinExistence type="inferred from homology"/>
<dbReference type="EC" id="1.1.1.133" evidence="1"/>
<dbReference type="EMBL" id="U09876">
    <property type="protein sequence ID" value="AAB88399.1"/>
    <property type="molecule type" value="Genomic_DNA"/>
</dbReference>
<dbReference type="EMBL" id="U00096">
    <property type="protein sequence ID" value="AAC75101.1"/>
    <property type="molecule type" value="Genomic_DNA"/>
</dbReference>
<dbReference type="EMBL" id="AP009048">
    <property type="protein sequence ID" value="BAA15882.1"/>
    <property type="molecule type" value="Genomic_DNA"/>
</dbReference>
<dbReference type="PIR" id="G64969">
    <property type="entry name" value="G64969"/>
</dbReference>
<dbReference type="RefSeq" id="NP_416544.1">
    <property type="nucleotide sequence ID" value="NC_000913.3"/>
</dbReference>
<dbReference type="RefSeq" id="WP_001023610.1">
    <property type="nucleotide sequence ID" value="NZ_LN832404.1"/>
</dbReference>
<dbReference type="SMR" id="P37760"/>
<dbReference type="BioGRID" id="4261549">
    <property type="interactions" value="185"/>
</dbReference>
<dbReference type="FunCoup" id="P37760">
    <property type="interactions" value="658"/>
</dbReference>
<dbReference type="IntAct" id="P37760">
    <property type="interactions" value="5"/>
</dbReference>
<dbReference type="STRING" id="511145.b2040"/>
<dbReference type="jPOST" id="P37760"/>
<dbReference type="PaxDb" id="511145-b2040"/>
<dbReference type="EnsemblBacteria" id="AAC75101">
    <property type="protein sequence ID" value="AAC75101"/>
    <property type="gene ID" value="b2040"/>
</dbReference>
<dbReference type="GeneID" id="947117"/>
<dbReference type="KEGG" id="ecj:JW2025"/>
<dbReference type="KEGG" id="eco:b2040"/>
<dbReference type="KEGG" id="ecoc:C3026_11490"/>
<dbReference type="PATRIC" id="fig|511145.12.peg.2117"/>
<dbReference type="EchoBASE" id="EB2310"/>
<dbReference type="eggNOG" id="COG1091">
    <property type="taxonomic scope" value="Bacteria"/>
</dbReference>
<dbReference type="HOGENOM" id="CLU_045518_1_0_6"/>
<dbReference type="InParanoid" id="P37760"/>
<dbReference type="OMA" id="IRTAWVY"/>
<dbReference type="OrthoDB" id="9803892at2"/>
<dbReference type="PhylomeDB" id="P37760"/>
<dbReference type="BioCyc" id="EcoCyc:DTDPDEHYRHAMREDUCT-MONOMER"/>
<dbReference type="UniPathway" id="UPA00124"/>
<dbReference type="UniPathway" id="UPA00281"/>
<dbReference type="PRO" id="PR:P37760"/>
<dbReference type="Proteomes" id="UP000000625">
    <property type="component" value="Chromosome"/>
</dbReference>
<dbReference type="GO" id="GO:0005829">
    <property type="term" value="C:cytosol"/>
    <property type="evidence" value="ECO:0000314"/>
    <property type="project" value="EcoCyc"/>
</dbReference>
<dbReference type="GO" id="GO:0008831">
    <property type="term" value="F:dTDP-4-dehydrorhamnose reductase activity"/>
    <property type="evidence" value="ECO:0000250"/>
    <property type="project" value="UniProtKB"/>
</dbReference>
<dbReference type="GO" id="GO:0046872">
    <property type="term" value="F:metal ion binding"/>
    <property type="evidence" value="ECO:0007669"/>
    <property type="project" value="UniProtKB-KW"/>
</dbReference>
<dbReference type="GO" id="GO:0019305">
    <property type="term" value="P:dTDP-rhamnose biosynthetic process"/>
    <property type="evidence" value="ECO:0000318"/>
    <property type="project" value="GO_Central"/>
</dbReference>
<dbReference type="GO" id="GO:0009103">
    <property type="term" value="P:lipopolysaccharide biosynthetic process"/>
    <property type="evidence" value="ECO:0000250"/>
    <property type="project" value="UniProtKB"/>
</dbReference>
<dbReference type="GO" id="GO:0009243">
    <property type="term" value="P:O antigen biosynthetic process"/>
    <property type="evidence" value="ECO:0000269"/>
    <property type="project" value="EcoCyc"/>
</dbReference>
<dbReference type="GO" id="GO:0000271">
    <property type="term" value="P:polysaccharide biosynthetic process"/>
    <property type="evidence" value="ECO:0000250"/>
    <property type="project" value="UniProtKB"/>
</dbReference>
<dbReference type="CDD" id="cd05254">
    <property type="entry name" value="dTDP_HR_like_SDR_e"/>
    <property type="match status" value="1"/>
</dbReference>
<dbReference type="Gene3D" id="3.40.50.720">
    <property type="entry name" value="NAD(P)-binding Rossmann-like Domain"/>
    <property type="match status" value="1"/>
</dbReference>
<dbReference type="Gene3D" id="3.90.25.10">
    <property type="entry name" value="UDP-galactose 4-epimerase, domain 1"/>
    <property type="match status" value="1"/>
</dbReference>
<dbReference type="InterPro" id="IPR005913">
    <property type="entry name" value="dTDP_dehydrorham_reduct"/>
</dbReference>
<dbReference type="InterPro" id="IPR036291">
    <property type="entry name" value="NAD(P)-bd_dom_sf"/>
</dbReference>
<dbReference type="InterPro" id="IPR029903">
    <property type="entry name" value="RmlD-like-bd"/>
</dbReference>
<dbReference type="NCBIfam" id="NF007440">
    <property type="entry name" value="PRK09987.1"/>
    <property type="match status" value="1"/>
</dbReference>
<dbReference type="NCBIfam" id="TIGR01214">
    <property type="entry name" value="rmlD"/>
    <property type="match status" value="1"/>
</dbReference>
<dbReference type="PANTHER" id="PTHR10491">
    <property type="entry name" value="DTDP-4-DEHYDRORHAMNOSE REDUCTASE"/>
    <property type="match status" value="1"/>
</dbReference>
<dbReference type="PANTHER" id="PTHR10491:SF4">
    <property type="entry name" value="METHIONINE ADENOSYLTRANSFERASE 2 SUBUNIT BETA"/>
    <property type="match status" value="1"/>
</dbReference>
<dbReference type="Pfam" id="PF04321">
    <property type="entry name" value="RmlD_sub_bind"/>
    <property type="match status" value="1"/>
</dbReference>
<dbReference type="SUPFAM" id="SSF51735">
    <property type="entry name" value="NAD(P)-binding Rossmann-fold domains"/>
    <property type="match status" value="1"/>
</dbReference>
<sequence>MNILLFGKTGQVGWELQRALAPLGNLIAFDVHSTDYCGDFSNPEGVAETVRSIRPDIIVNAAAHTAVDKAESEPEFAQLINATSVEAIAKAANEVGAWVIHYSTDYVFPGNGDMPWLETDATAPLNVYGETKLAGEKALQEYCAKHLIFRTSWVYAGKGNNFAKTMLRLAKEREELAVINDQFGAPTGAELLADCTAHAIRVALNKPDVAGLYHLVASGTTTWYDYAALVFEEARKAGIPLALNKLNAVPTTAYPTPARRPHNSRLNTEKFQQNFALVLPDWQVGVKRMLNELFTTTAI</sequence>
<reference key="1">
    <citation type="journal article" date="1994" name="J. Bacteriol.">
        <title>Structure of the O antigen of Escherichia coli K-12 and the sequence of its rfb gene cluster.</title>
        <authorList>
            <person name="Stevenson G."/>
            <person name="Neal B."/>
            <person name="Liu D."/>
            <person name="Hobbs M."/>
            <person name="Packer N.H."/>
            <person name="Batley M."/>
            <person name="Redmond J.W."/>
            <person name="Lindquist L."/>
            <person name="Reeves P.R."/>
        </authorList>
    </citation>
    <scope>NUCLEOTIDE SEQUENCE [GENOMIC DNA]</scope>
    <scope>FUNCTION</scope>
    <scope>PATHWAY</scope>
    <source>
        <strain>K12 / WG1</strain>
    </source>
</reference>
<reference key="2">
    <citation type="submission" date="1997-12" db="EMBL/GenBank/DDBJ databases">
        <authorList>
            <person name="Stevenson G."/>
        </authorList>
    </citation>
    <scope>SEQUENCE REVISION TO 227</scope>
</reference>
<reference key="3">
    <citation type="journal article" date="1996" name="DNA Res.">
        <title>A 460-kb DNA sequence of the Escherichia coli K-12 genome corresponding to the 40.1-50.0 min region on the linkage map.</title>
        <authorList>
            <person name="Itoh T."/>
            <person name="Aiba H."/>
            <person name="Baba T."/>
            <person name="Fujita K."/>
            <person name="Hayashi K."/>
            <person name="Inada T."/>
            <person name="Isono K."/>
            <person name="Kasai H."/>
            <person name="Kimura S."/>
            <person name="Kitakawa M."/>
            <person name="Kitagawa M."/>
            <person name="Makino K."/>
            <person name="Miki T."/>
            <person name="Mizobuchi K."/>
            <person name="Mori H."/>
            <person name="Mori T."/>
            <person name="Motomura K."/>
            <person name="Nakade S."/>
            <person name="Nakamura Y."/>
            <person name="Nashimoto H."/>
            <person name="Nishio Y."/>
            <person name="Oshima T."/>
            <person name="Saito N."/>
            <person name="Sampei G."/>
            <person name="Seki Y."/>
            <person name="Sivasundaram S."/>
            <person name="Tagami H."/>
            <person name="Takeda J."/>
            <person name="Takemoto K."/>
            <person name="Wada C."/>
            <person name="Yamamoto Y."/>
            <person name="Horiuchi T."/>
        </authorList>
    </citation>
    <scope>NUCLEOTIDE SEQUENCE [LARGE SCALE GENOMIC DNA]</scope>
    <source>
        <strain>K12 / W3110 / ATCC 27325 / DSM 5911</strain>
    </source>
</reference>
<reference key="4">
    <citation type="journal article" date="1997" name="Science">
        <title>The complete genome sequence of Escherichia coli K-12.</title>
        <authorList>
            <person name="Blattner F.R."/>
            <person name="Plunkett G. III"/>
            <person name="Bloch C.A."/>
            <person name="Perna N.T."/>
            <person name="Burland V."/>
            <person name="Riley M."/>
            <person name="Collado-Vides J."/>
            <person name="Glasner J.D."/>
            <person name="Rode C.K."/>
            <person name="Mayhew G.F."/>
            <person name="Gregor J."/>
            <person name="Davis N.W."/>
            <person name="Kirkpatrick H.A."/>
            <person name="Goeden M.A."/>
            <person name="Rose D.J."/>
            <person name="Mau B."/>
            <person name="Shao Y."/>
        </authorList>
    </citation>
    <scope>NUCLEOTIDE SEQUENCE [LARGE SCALE GENOMIC DNA]</scope>
    <source>
        <strain>K12 / MG1655 / ATCC 47076</strain>
    </source>
</reference>
<reference key="5">
    <citation type="journal article" date="2006" name="Mol. Syst. Biol.">
        <title>Highly accurate genome sequences of Escherichia coli K-12 strains MG1655 and W3110.</title>
        <authorList>
            <person name="Hayashi K."/>
            <person name="Morooka N."/>
            <person name="Yamamoto Y."/>
            <person name="Fujita K."/>
            <person name="Isono K."/>
            <person name="Choi S."/>
            <person name="Ohtsubo E."/>
            <person name="Baba T."/>
            <person name="Wanner B.L."/>
            <person name="Mori H."/>
            <person name="Horiuchi T."/>
        </authorList>
    </citation>
    <scope>NUCLEOTIDE SEQUENCE [LARGE SCALE GENOMIC DNA]</scope>
    <source>
        <strain>K12 / W3110 / ATCC 27325 / DSM 5911</strain>
    </source>
</reference>
<accession>P37760</accession>
<accession>P76377</accession>
<gene>
    <name evidence="2" type="primary">rfbD</name>
    <name type="synonym">rmlD</name>
    <name type="ordered locus">b2040</name>
    <name type="ordered locus">JW2025</name>
</gene>
<organism>
    <name type="scientific">Escherichia coli (strain K12)</name>
    <dbReference type="NCBI Taxonomy" id="83333"/>
    <lineage>
        <taxon>Bacteria</taxon>
        <taxon>Pseudomonadati</taxon>
        <taxon>Pseudomonadota</taxon>
        <taxon>Gammaproteobacteria</taxon>
        <taxon>Enterobacterales</taxon>
        <taxon>Enterobacteriaceae</taxon>
        <taxon>Escherichia</taxon>
    </lineage>
</organism>
<name>RMLD_ECOLI</name>
<protein>
    <recommendedName>
        <fullName evidence="1">dTDP-4-dehydrorhamnose reductase</fullName>
        <ecNumber evidence="1">1.1.1.133</ecNumber>
    </recommendedName>
    <alternativeName>
        <fullName evidence="1">dTDP-4-keto-L-rhamnose reductase</fullName>
    </alternativeName>
    <alternativeName>
        <fullName evidence="1">dTDP-6-deoxy-L-lyxo-4-hexulose reductase</fullName>
    </alternativeName>
    <alternativeName>
        <fullName evidence="1">dTDP-6-deoxy-L-mannose dehydrogenase</fullName>
    </alternativeName>
    <alternativeName>
        <fullName evidence="1">dTDP-L-rhamnose synthase</fullName>
    </alternativeName>
</protein>
<comment type="function">
    <text evidence="1 4">Involved in the biosynthesis of the dTDP-L-rhamnose which is an important component of lipopolysaccharide (LPS) (Probable). Catalyzes the reduction of dTDP-6-deoxy-L-lyxo-4-hexulose to yield dTDP-L-rhamnose (By similarity). RmlD uses NADH and NADPH nearly equally well (By similarity).</text>
</comment>
<comment type="catalytic activity">
    <reaction evidence="1">
        <text>dTDP-beta-L-rhamnose + NADP(+) = dTDP-4-dehydro-beta-L-rhamnose + NADPH + H(+)</text>
        <dbReference type="Rhea" id="RHEA:21796"/>
        <dbReference type="ChEBI" id="CHEBI:15378"/>
        <dbReference type="ChEBI" id="CHEBI:57510"/>
        <dbReference type="ChEBI" id="CHEBI:57783"/>
        <dbReference type="ChEBI" id="CHEBI:58349"/>
        <dbReference type="ChEBI" id="CHEBI:62830"/>
        <dbReference type="EC" id="1.1.1.133"/>
    </reaction>
</comment>
<comment type="cofactor">
    <cofactor evidence="1">
        <name>Mg(2+)</name>
        <dbReference type="ChEBI" id="CHEBI:18420"/>
    </cofactor>
    <text evidence="1">Binds 1 Mg(2+) ion per monomer.</text>
</comment>
<comment type="pathway">
    <text evidence="4">Carbohydrate biosynthesis; dTDP-L-rhamnose biosynthesis.</text>
</comment>
<comment type="pathway">
    <text evidence="4">Bacterial outer membrane biogenesis; LPS O-antigen biosynthesis.</text>
</comment>
<comment type="subunit">
    <text evidence="1">Homodimer.</text>
</comment>
<comment type="similarity">
    <text evidence="3">Belongs to the dTDP-4-dehydrorhamnose reductase family.</text>
</comment>